<accession>Q8CQQ9</accession>
<comment type="similarity">
    <text evidence="1">Belongs to the UPF0355 family.</text>
</comment>
<reference key="1">
    <citation type="journal article" date="2003" name="Mol. Microbiol.">
        <title>Genome-based analysis of virulence genes in a non-biofilm-forming Staphylococcus epidermidis strain (ATCC 12228).</title>
        <authorList>
            <person name="Zhang Y.-Q."/>
            <person name="Ren S.-X."/>
            <person name="Li H.-L."/>
            <person name="Wang Y.-X."/>
            <person name="Fu G."/>
            <person name="Yang J."/>
            <person name="Qin Z.-Q."/>
            <person name="Miao Y.-G."/>
            <person name="Wang W.-Y."/>
            <person name="Chen R.-S."/>
            <person name="Shen Y."/>
            <person name="Chen Z."/>
            <person name="Yuan Z.-H."/>
            <person name="Zhao G.-P."/>
            <person name="Qu D."/>
            <person name="Danchin A."/>
            <person name="Wen Y.-M."/>
        </authorList>
    </citation>
    <scope>NUCLEOTIDE SEQUENCE [LARGE SCALE GENOMIC DNA]</scope>
    <source>
        <strain>ATCC 12228 / FDA PCI 1200</strain>
    </source>
</reference>
<proteinExistence type="inferred from homology"/>
<name>UP355_STAES</name>
<dbReference type="EMBL" id="AE015929">
    <property type="protein sequence ID" value="AAO05994.1"/>
    <property type="molecule type" value="Genomic_DNA"/>
</dbReference>
<dbReference type="RefSeq" id="NP_765906.1">
    <property type="nucleotide sequence ID" value="NC_004461.1"/>
</dbReference>
<dbReference type="RefSeq" id="WP_001829411.1">
    <property type="nucleotide sequence ID" value="NZ_WBME01000004.1"/>
</dbReference>
<dbReference type="KEGG" id="sep:SE_2351"/>
<dbReference type="PATRIC" id="fig|176280.10.peg.2294"/>
<dbReference type="eggNOG" id="ENOG50334EH">
    <property type="taxonomic scope" value="Bacteria"/>
</dbReference>
<dbReference type="HOGENOM" id="CLU_152601_0_0_9"/>
<dbReference type="OrthoDB" id="2409186at2"/>
<dbReference type="Proteomes" id="UP000001411">
    <property type="component" value="Chromosome"/>
</dbReference>
<dbReference type="InterPro" id="IPR025889">
    <property type="entry name" value="GSP17M-like_dom"/>
</dbReference>
<dbReference type="Pfam" id="PF11181">
    <property type="entry name" value="YflT"/>
    <property type="match status" value="1"/>
</dbReference>
<gene>
    <name type="ordered locus">SE_2351</name>
</gene>
<feature type="chain" id="PRO_0000220350" description="UPF0355 protein SE_2351">
    <location>
        <begin position="1"/>
        <end position="135"/>
    </location>
</feature>
<protein>
    <recommendedName>
        <fullName>UPF0355 protein SE_2351</fullName>
    </recommendedName>
</protein>
<evidence type="ECO:0000305" key="1"/>
<organism>
    <name type="scientific">Staphylococcus epidermidis (strain ATCC 12228 / FDA PCI 1200)</name>
    <dbReference type="NCBI Taxonomy" id="176280"/>
    <lineage>
        <taxon>Bacteria</taxon>
        <taxon>Bacillati</taxon>
        <taxon>Bacillota</taxon>
        <taxon>Bacilli</taxon>
        <taxon>Bacillales</taxon>
        <taxon>Staphylococcaceae</taxon>
        <taxon>Staphylococcus</taxon>
    </lineage>
</organism>
<sequence length="135" mass="15129">MAKITVVNNQDELYKVINQKKSEGYLETELAVISKSKLHLDDLHNSQISLMATSGSFSDRMSRLLTGEDGEETVLSRYDLTDNELEGYKQDILNDKMLVVANSDRSSHDEVEDNNAAYKEVDITHYAAESEGPKA</sequence>